<evidence type="ECO:0000250" key="1"/>
<evidence type="ECO:0000256" key="2">
    <source>
        <dbReference type="SAM" id="MobiDB-lite"/>
    </source>
</evidence>
<evidence type="ECO:0000305" key="3"/>
<name>MVP_CMVS</name>
<dbReference type="EMBL" id="U37227">
    <property type="protein sequence ID" value="AAB02147.1"/>
    <property type="molecule type" value="Genomic_RNA"/>
</dbReference>
<dbReference type="GO" id="GO:0044219">
    <property type="term" value="C:host cell plasmodesma"/>
    <property type="evidence" value="ECO:0007669"/>
    <property type="project" value="UniProtKB-SubCell"/>
</dbReference>
<dbReference type="GO" id="GO:0046740">
    <property type="term" value="P:transport of virus in host, cell to cell"/>
    <property type="evidence" value="ECO:0007669"/>
    <property type="project" value="UniProtKB-KW"/>
</dbReference>
<dbReference type="InterPro" id="IPR000603">
    <property type="entry name" value="MPV"/>
</dbReference>
<dbReference type="Pfam" id="PF00803">
    <property type="entry name" value="3A"/>
    <property type="match status" value="1"/>
</dbReference>
<keyword id="KW-1031">Host cell junction</keyword>
<keyword id="KW-0813">Transport</keyword>
<keyword id="KW-0916">Viral movement protein</keyword>
<proteinExistence type="inferred from homology"/>
<protein>
    <recommendedName>
        <fullName>Movement protein</fullName>
        <shortName>MP</shortName>
    </recommendedName>
    <alternativeName>
        <fullName>Protein 3A</fullName>
    </alternativeName>
</protein>
<comment type="function">
    <text evidence="1">Transports viral genome to neighboring plant cells directly through plasmosdesmata, without any budding. The movement protein allows efficient cell to cell propagation, by bypassing the host cell wall barrier. Acts by forming a tubular structure at the host plasmodesmata, enlarging it enough to allow free passage of virion capsids (By similarity).</text>
</comment>
<comment type="subcellular location">
    <subcellularLocation>
        <location evidence="1">Host cell junction</location>
        <location evidence="1">Host plasmodesma</location>
    </subcellularLocation>
    <text evidence="1">Assembles into long tubular structures at the surface of the infected protoplast.</text>
</comment>
<comment type="similarity">
    <text evidence="3">Belongs to the cucumovirus movement protein family.</text>
</comment>
<organismHost>
    <name type="scientific">Cucumis sativus</name>
    <name type="common">Cucumber</name>
    <dbReference type="NCBI Taxonomy" id="3659"/>
</organismHost>
<organismHost>
    <name type="scientific">Solanum lycopersicum</name>
    <name type="common">Tomato</name>
    <name type="synonym">Lycopersicon esculentum</name>
    <dbReference type="NCBI Taxonomy" id="4081"/>
</organismHost>
<organismHost>
    <name type="scientific">Spinacia oleracea</name>
    <name type="common">Spinach</name>
    <dbReference type="NCBI Taxonomy" id="3562"/>
</organismHost>
<reference key="1">
    <citation type="journal article" date="1996" name="Virology">
        <title>Cell-to-cell transport of movement-defective cucumber mosaic and tobacco mosaic viruses in transgenic plants expressing heterologous movement protein genes.</title>
        <authorList>
            <person name="Cooper B."/>
            <person name="Schmitz I."/>
            <person name="Rao A.L."/>
            <person name="Beachy R.N."/>
            <person name="Dodds J.A."/>
        </authorList>
    </citation>
    <scope>NUCLEOTIDE SEQUENCE [GENOMIC RNA]</scope>
</reference>
<gene>
    <name type="ORF">ORF3a</name>
</gene>
<sequence>MAFQGTSRTLTQQSSAASSDDLQKILFSPDAIKKMATECDLGRHHWMRADNAISVRPLVPQVTSNNLLSFFKSGYDAGELRSKGYMSVPQVLCAVTRTVSTDAEGSLKIYLADLGDKELSPIDGQCVTLHNHELPALISFQPTYDCPMELVANRHRCFAVVVERHGYIGYGGTTASVCSNWQAQFSSKNNNYTHAAAGKTLVLPYNRLAEHSKPSAVARLLKSQLNNVSSSRYLLPNVALNQNASGHESEILNESPPIAIGSPSASRNNSFRSQVVNGL</sequence>
<feature type="chain" id="PRO_0000083248" description="Movement protein">
    <location>
        <begin position="1"/>
        <end position="279"/>
    </location>
</feature>
<feature type="region of interest" description="Disordered" evidence="2">
    <location>
        <begin position="256"/>
        <end position="279"/>
    </location>
</feature>
<feature type="compositionally biased region" description="Low complexity" evidence="2">
    <location>
        <begin position="256"/>
        <end position="266"/>
    </location>
</feature>
<feature type="compositionally biased region" description="Polar residues" evidence="2">
    <location>
        <begin position="267"/>
        <end position="279"/>
    </location>
</feature>
<organism>
    <name type="scientific">Cucumber mosaic virus (strain S)</name>
    <name type="common">CMV</name>
    <dbReference type="NCBI Taxonomy" id="117126"/>
    <lineage>
        <taxon>Viruses</taxon>
        <taxon>Riboviria</taxon>
        <taxon>Orthornavirae</taxon>
        <taxon>Kitrinoviricota</taxon>
        <taxon>Alsuviricetes</taxon>
        <taxon>Martellivirales</taxon>
        <taxon>Bromoviridae</taxon>
        <taxon>Cucumovirus</taxon>
        <taxon>Cucumber mosaic virus</taxon>
    </lineage>
</organism>
<accession>Q66134</accession>